<keyword id="KW-0002">3D-structure</keyword>
<keyword id="KW-0067">ATP-binding</keyword>
<keyword id="KW-0963">Cytoplasm</keyword>
<keyword id="KW-0227">DNA damage</keyword>
<keyword id="KW-0228">DNA excision</keyword>
<keyword id="KW-0234">DNA repair</keyword>
<keyword id="KW-0238">DNA-binding</keyword>
<keyword id="KW-0267">Excision nuclease</keyword>
<keyword id="KW-0479">Metal-binding</keyword>
<keyword id="KW-0547">Nucleotide-binding</keyword>
<keyword id="KW-1185">Reference proteome</keyword>
<keyword id="KW-0677">Repeat</keyword>
<keyword id="KW-0742">SOS response</keyword>
<keyword id="KW-0862">Zinc</keyword>
<keyword id="KW-0863">Zinc-finger</keyword>
<accession>P0A698</accession>
<accession>P07671</accession>
<accession>P76788</accession>
<accession>Q2M6P6</accession>
<gene>
    <name evidence="1" type="primary">uvrA</name>
    <name type="synonym">dinE</name>
    <name type="ordered locus">b4058</name>
    <name type="ordered locus">JW4019</name>
</gene>
<comment type="function">
    <text evidence="1">The UvrABC repair system catalyzes the recognition and processing of DNA lesions. UvrA is an ATPase and a DNA-binding protein. A damage recognition complex composed of 2 UvrA and 2 UvrB subunits scans DNA for abnormalities. When the presence of a lesion has been verified by UvrB, the UvrA molecules dissociate.</text>
</comment>
<comment type="subunit">
    <text evidence="1 2">Forms a heterotetramer with UvrB during the search for lesions (By similarity). Interacts with TRCF (Mfd). UvrB and TRCF binding to UvrA could be mutually exclusive.</text>
</comment>
<comment type="interaction">
    <interactant intactId="EBI-552091">
        <id>P0A698</id>
    </interactant>
    <interactant intactId="EBI-560039">
        <id>P0AFP2</id>
        <label>atl</label>
    </interactant>
    <organismsDiffer>false</organismsDiffer>
    <experiments>2</experiments>
</comment>
<comment type="interaction">
    <interactant intactId="EBI-552091">
        <id>P0A698</id>
    </interactant>
    <interactant intactId="EBI-554211">
        <id>P30958</id>
        <label>mfd</label>
    </interactant>
    <organismsDiffer>false</organismsDiffer>
    <experiments>2</experiments>
</comment>
<comment type="interaction">
    <interactant intactId="EBI-552091">
        <id>P0A698</id>
    </interactant>
    <interactant intactId="EBI-552091">
        <id>P0A698</id>
        <label>uvrA</label>
    </interactant>
    <organismsDiffer>false</organismsDiffer>
    <experiments>2</experiments>
</comment>
<comment type="interaction">
    <interactant intactId="EBI-552091">
        <id>P0A698</id>
    </interactant>
    <interactant intactId="EBI-552176">
        <id>P0A8F8</id>
        <label>uvrB</label>
    </interactant>
    <organismsDiffer>false</organismsDiffer>
    <experiments>7</experiments>
</comment>
<comment type="subcellular location">
    <subcellularLocation>
        <location evidence="1">Cytoplasm</location>
    </subcellularLocation>
</comment>
<comment type="miscellaneous">
    <text>Binds about 2 zinc atoms/molecule.</text>
</comment>
<comment type="similarity">
    <text evidence="1">Belongs to the ABC transporter superfamily. UvrA family.</text>
</comment>
<feature type="chain" id="PRO_0000093049" description="UvrABC system protein A">
    <location>
        <begin position="1"/>
        <end position="940"/>
    </location>
</feature>
<feature type="domain" description="ABC transporter 1" evidence="1">
    <location>
        <begin position="310"/>
        <end position="587"/>
    </location>
</feature>
<feature type="domain" description="ABC transporter 2" evidence="1">
    <location>
        <begin position="607"/>
        <end position="937"/>
    </location>
</feature>
<feature type="zinc finger region" description="C4-type" evidence="1">
    <location>
        <begin position="253"/>
        <end position="280"/>
    </location>
</feature>
<feature type="zinc finger region" description="C4-type" evidence="1">
    <location>
        <begin position="740"/>
        <end position="766"/>
    </location>
</feature>
<feature type="binding site">
    <location>
        <begin position="31"/>
        <end position="38"/>
    </location>
    <ligand>
        <name>ATP</name>
        <dbReference type="ChEBI" id="CHEBI:30616"/>
    </ligand>
</feature>
<feature type="binding site">
    <location>
        <begin position="640"/>
        <end position="647"/>
    </location>
    <ligand>
        <name>ATP</name>
        <dbReference type="ChEBI" id="CHEBI:30616"/>
    </ligand>
</feature>
<feature type="mutagenesis site" description="Reduced activity." evidence="3">
    <original>C</original>
    <variation>A</variation>
    <variation>H</variation>
    <variation>S</variation>
    <location>
        <position position="253"/>
    </location>
</feature>
<feature type="helix" evidence="4">
    <location>
        <begin position="132"/>
        <end position="138"/>
    </location>
</feature>
<feature type="strand" evidence="4">
    <location>
        <begin position="148"/>
        <end position="160"/>
    </location>
</feature>
<feature type="helix" evidence="4">
    <location>
        <begin position="163"/>
        <end position="172"/>
    </location>
</feature>
<feature type="strand" evidence="4">
    <location>
        <begin position="176"/>
        <end position="179"/>
    </location>
</feature>
<feature type="strand" evidence="4">
    <location>
        <begin position="182"/>
        <end position="185"/>
    </location>
</feature>
<feature type="strand" evidence="4">
    <location>
        <begin position="196"/>
        <end position="207"/>
    </location>
</feature>
<feature type="helix" evidence="4">
    <location>
        <begin position="216"/>
        <end position="227"/>
    </location>
</feature>
<feature type="strand" evidence="4">
    <location>
        <begin position="228"/>
        <end position="238"/>
    </location>
</feature>
<feature type="strand" evidence="4">
    <location>
        <begin position="245"/>
        <end position="248"/>
    </location>
</feature>
<organism>
    <name type="scientific">Escherichia coli (strain K12)</name>
    <dbReference type="NCBI Taxonomy" id="83333"/>
    <lineage>
        <taxon>Bacteria</taxon>
        <taxon>Pseudomonadati</taxon>
        <taxon>Pseudomonadota</taxon>
        <taxon>Gammaproteobacteria</taxon>
        <taxon>Enterobacterales</taxon>
        <taxon>Enterobacteriaceae</taxon>
        <taxon>Escherichia</taxon>
    </lineage>
</organism>
<reference key="1">
    <citation type="journal article" date="1986" name="J. Biol. Chem.">
        <title>Sequences of Escherichia coli uvrA gene and protein reveal two potential ATP binding sites.</title>
        <authorList>
            <person name="Husain I."/>
            <person name="van Houten B."/>
            <person name="Thomas D.C."/>
            <person name="Sancar A."/>
        </authorList>
    </citation>
    <scope>NUCLEOTIDE SEQUENCE [GENOMIC DNA]</scope>
</reference>
<reference key="2">
    <citation type="journal article" date="1993" name="Nucleic Acids Res.">
        <title>Analysis of the Escherichia coli genome. IV. DNA sequence of the region from 89.2 to 92.8 minutes.</title>
        <authorList>
            <person name="Blattner F.R."/>
            <person name="Burland V.D."/>
            <person name="Plunkett G. III"/>
            <person name="Sofia H.J."/>
            <person name="Daniels D.L."/>
        </authorList>
    </citation>
    <scope>NUCLEOTIDE SEQUENCE [LARGE SCALE GENOMIC DNA]</scope>
    <source>
        <strain>K12 / MG1655 / ATCC 47076</strain>
    </source>
</reference>
<reference key="3">
    <citation type="journal article" date="1997" name="Science">
        <title>The complete genome sequence of Escherichia coli K-12.</title>
        <authorList>
            <person name="Blattner F.R."/>
            <person name="Plunkett G. III"/>
            <person name="Bloch C.A."/>
            <person name="Perna N.T."/>
            <person name="Burland V."/>
            <person name="Riley M."/>
            <person name="Collado-Vides J."/>
            <person name="Glasner J.D."/>
            <person name="Rode C.K."/>
            <person name="Mayhew G.F."/>
            <person name="Gregor J."/>
            <person name="Davis N.W."/>
            <person name="Kirkpatrick H.A."/>
            <person name="Goeden M.A."/>
            <person name="Rose D.J."/>
            <person name="Mau B."/>
            <person name="Shao Y."/>
        </authorList>
    </citation>
    <scope>NUCLEOTIDE SEQUENCE [LARGE SCALE GENOMIC DNA]</scope>
    <source>
        <strain>K12 / MG1655 / ATCC 47076</strain>
    </source>
</reference>
<reference key="4">
    <citation type="journal article" date="2006" name="Mol. Syst. Biol.">
        <title>Highly accurate genome sequences of Escherichia coli K-12 strains MG1655 and W3110.</title>
        <authorList>
            <person name="Hayashi K."/>
            <person name="Morooka N."/>
            <person name="Yamamoto Y."/>
            <person name="Fujita K."/>
            <person name="Isono K."/>
            <person name="Choi S."/>
            <person name="Ohtsubo E."/>
            <person name="Baba T."/>
            <person name="Wanner B.L."/>
            <person name="Mori H."/>
            <person name="Horiuchi T."/>
        </authorList>
    </citation>
    <scope>NUCLEOTIDE SEQUENCE [LARGE SCALE GENOMIC DNA]</scope>
    <source>
        <strain>K12 / W3110 / ATCC 27325 / DSM 5911</strain>
    </source>
</reference>
<reference key="5">
    <citation type="journal article" date="1983" name="Nucleic Acids Res.">
        <title>In vivo regulation of the uvrA gene: role of the '-10' and '-35' promoter regions.</title>
        <authorList>
            <person name="Backendorf C."/>
            <person name="Brandsma J.A."/>
            <person name="Kartasova T."/>
            <person name="van de Putte P."/>
        </authorList>
    </citation>
    <scope>NUCLEOTIDE SEQUENCE [GENOMIC DNA] OF 1-25</scope>
</reference>
<reference key="6">
    <citation type="journal article" date="1982" name="Nature">
        <title>LexA protein inhibits transcription of the E. coli uvrA gene in vitro.</title>
        <authorList>
            <person name="Sancar A."/>
            <person name="Sancar G.B."/>
            <person name="Rupp W.D."/>
            <person name="Little J.W."/>
            <person name="Mount D.W."/>
        </authorList>
    </citation>
    <scope>NUCLEOTIDE SEQUENCE [GENOMIC DNA] OF 1-14</scope>
</reference>
<reference key="7">
    <citation type="journal article" date="1991" name="Biochemistry">
        <title>Isolation and characterization of functional domains of UvrA.</title>
        <authorList>
            <person name="Myles G.M."/>
            <person name="Sancar A."/>
        </authorList>
    </citation>
    <scope>CHARACTERIZATION</scope>
</reference>
<reference key="8">
    <citation type="journal article" date="1989" name="J. Biol. Chem.">
        <title>Evidence from extended X-ray absorption fine structure and site-specific mutagenesis for zinc fingers in UvrA protein of Escherichia coli.</title>
        <authorList>
            <person name="Navaratnam S."/>
            <person name="Myles G.M."/>
            <person name="Strange R.W."/>
            <person name="Sancar A."/>
        </authorList>
    </citation>
    <scope>MUTAGENESIS OF CYS-253</scope>
</reference>
<reference key="9">
    <citation type="journal article" date="1997" name="Electrophoresis">
        <title>Escherichia coli proteome analysis using the gene-protein database.</title>
        <authorList>
            <person name="VanBogelen R.A."/>
            <person name="Abshire K.Z."/>
            <person name="Moldover B."/>
            <person name="Olson E.R."/>
            <person name="Neidhardt F.C."/>
        </authorList>
    </citation>
    <scope>IDENTIFICATION BY 2D-GEL</scope>
</reference>
<reference key="10">
    <citation type="journal article" date="2012" name="Proc. Natl. Acad. Sci. U.S.A.">
        <title>Nucleotide excision repair (NER) machinery recruitment by the transcription-repair coupling factor involves unmasking of a conserved intramolecular interface.</title>
        <authorList>
            <person name="Deaconescu A.M."/>
            <person name="Sevostyanova A."/>
            <person name="Artsimovitch I."/>
            <person name="Grigorieff N."/>
        </authorList>
    </citation>
    <scope>X-RAY CRYSTALLOGRAPHY (2.8 ANGSTROMS) OF 131-250 IN COMPLEX WITH TRCF</scope>
    <scope>SUBUNIT</scope>
</reference>
<sequence length="940" mass="103868">MDKIEVRGARTHNLKNINLVIPRDKLIVVTGLSGSGKSSLAFDTLYAEGQRRYVESLSAYARQFLSLMEKPDVDHIEGLSPAISIEQKSTSHNPRSTVGTITEIHDYLRLLFARVGEPRCPDHDVPLAAQTVSQMVDNVLSQPEGKRLMLLAPIIKERKGEHTKTLENLASQGYIRARIDGEVCDLSDPPKLELQKKHTIEVVVDRFKVRDDLTQRLAESFETALELSGGTAVVADMDDPKAEELLFSANFACPICGYSMRELEPRLFSFNNPAGACPTCDGLGVQQYFDPDRVIQNPELSLAGGAIRGWDRRNFYYFQMLKSLADHYKFDVEAPWGSLSANVHKVVLYGSGKENIEFKYMNDRGDTSIRRHPFEGVLHNMERRYKETESSAVREELAKFISNRPCASCEGTRLRREARHVYVENTPLPAISDMSIGHAMEFFNNLKLAGQRAKIAEKILKEIGDRLKFLVNVGLNYLTLSRSAETLSGGEAQRIRLASQIGAGLVGVMYVLDEPSIGLHQRDNERLLGTLIHLRDLGNTVIVVEHDEDAIRAADHVIDIGPGAGVHGGEVVAEGPLEAIMAVPESLTGQYMSGKRKIEVPKKRVPANPEKVLKLTGARGNNLKDVTLTLPVGLFTCITGVSGSGKSTLINDTLFPIAQRQLNGATIAEPAPYRDIQGLEHFDKVIDIDQSPIGRTPRSNPATYTGVFTPVRELFAGVPESRARGYTPGRFSFNVRGGRCEACQGDGVIKVEMHFLPDIYVPCDQCKGKRYNRETLEIKYKGKTIHEVLDMTIEEAREFFDAVPALARKLQTLMDVGLTYIRLGQSATTLSGGEAQRVKLARELSKRGTGQTLYILDEPTTGLHFADIQQLLDVLHKLRDQGNTIVVIEHNLDVIKTADWIVDLGPEGGSGGGEILVSGTPETVAECEASHTARFLKPML</sequence>
<proteinExistence type="evidence at protein level"/>
<dbReference type="EMBL" id="M13495">
    <property type="protein sequence ID" value="AAA24754.1"/>
    <property type="molecule type" value="Genomic_DNA"/>
</dbReference>
<dbReference type="EMBL" id="U00006">
    <property type="protein sequence ID" value="AAC43152.1"/>
    <property type="molecule type" value="Genomic_DNA"/>
</dbReference>
<dbReference type="EMBL" id="U00096">
    <property type="protein sequence ID" value="AAC77028.1"/>
    <property type="molecule type" value="Genomic_DNA"/>
</dbReference>
<dbReference type="EMBL" id="AP009048">
    <property type="protein sequence ID" value="BAE78060.1"/>
    <property type="molecule type" value="Genomic_DNA"/>
</dbReference>
<dbReference type="EMBL" id="X01621">
    <property type="protein sequence ID" value="CAA25764.1"/>
    <property type="molecule type" value="Genomic_DNA"/>
</dbReference>
<dbReference type="EMBL" id="J01721">
    <property type="protein sequence ID" value="AAA24753.1"/>
    <property type="molecule type" value="Genomic_DNA"/>
</dbReference>
<dbReference type="PIR" id="A23869">
    <property type="entry name" value="BVECUA"/>
</dbReference>
<dbReference type="RefSeq" id="NP_418482.1">
    <property type="nucleotide sequence ID" value="NC_000913.3"/>
</dbReference>
<dbReference type="RefSeq" id="WP_000357740.1">
    <property type="nucleotide sequence ID" value="NZ_STEB01000022.1"/>
</dbReference>
<dbReference type="PDB" id="4DFC">
    <property type="method" value="X-ray"/>
    <property type="resolution" value="2.80 A"/>
    <property type="chains" value="B/D=131-250"/>
</dbReference>
<dbReference type="PDBsum" id="4DFC"/>
<dbReference type="SMR" id="P0A698"/>
<dbReference type="BioGRID" id="4262670">
    <property type="interactions" value="63"/>
</dbReference>
<dbReference type="BioGRID" id="852853">
    <property type="interactions" value="2"/>
</dbReference>
<dbReference type="ComplexPortal" id="CPX-2151">
    <property type="entry name" value="UvrAB DNA damage sensor complex"/>
</dbReference>
<dbReference type="ComplexPortal" id="CPX-2155">
    <property type="entry name" value="TRCF-UvrA complex"/>
</dbReference>
<dbReference type="DIP" id="DIP-35876N"/>
<dbReference type="FunCoup" id="P0A698">
    <property type="interactions" value="412"/>
</dbReference>
<dbReference type="IntAct" id="P0A698">
    <property type="interactions" value="17"/>
</dbReference>
<dbReference type="STRING" id="511145.b4058"/>
<dbReference type="jPOST" id="P0A698"/>
<dbReference type="PaxDb" id="511145-b4058"/>
<dbReference type="EnsemblBacteria" id="AAC77028">
    <property type="protein sequence ID" value="AAC77028"/>
    <property type="gene ID" value="b4058"/>
</dbReference>
<dbReference type="GeneID" id="93777773"/>
<dbReference type="GeneID" id="948559"/>
<dbReference type="KEGG" id="ecj:JW4019"/>
<dbReference type="KEGG" id="eco:b4058"/>
<dbReference type="KEGG" id="ecoc:C3026_21930"/>
<dbReference type="PATRIC" id="fig|1411691.4.peg.2647"/>
<dbReference type="EchoBASE" id="EB1054"/>
<dbReference type="eggNOG" id="COG0178">
    <property type="taxonomic scope" value="Bacteria"/>
</dbReference>
<dbReference type="HOGENOM" id="CLU_001370_0_2_6"/>
<dbReference type="InParanoid" id="P0A698"/>
<dbReference type="OMA" id="EFFKAVP"/>
<dbReference type="OrthoDB" id="9809851at2"/>
<dbReference type="PhylomeDB" id="P0A698"/>
<dbReference type="BioCyc" id="EcoCyc:EG11061-MONOMER"/>
<dbReference type="BioCyc" id="MetaCyc:EG11061-MONOMER"/>
<dbReference type="BRENDA" id="3.6.1.3">
    <property type="organism ID" value="2026"/>
</dbReference>
<dbReference type="EvolutionaryTrace" id="P0A698"/>
<dbReference type="PRO" id="PR:P0A698"/>
<dbReference type="Proteomes" id="UP000000625">
    <property type="component" value="Chromosome"/>
</dbReference>
<dbReference type="GO" id="GO:0005829">
    <property type="term" value="C:cytosol"/>
    <property type="evidence" value="ECO:0000314"/>
    <property type="project" value="EcoCyc"/>
</dbReference>
<dbReference type="GO" id="GO:1990391">
    <property type="term" value="C:DNA repair complex"/>
    <property type="evidence" value="ECO:0000353"/>
    <property type="project" value="ComplexPortal"/>
</dbReference>
<dbReference type="GO" id="GO:0009380">
    <property type="term" value="C:excinuclease repair complex"/>
    <property type="evidence" value="ECO:0000314"/>
    <property type="project" value="UniProtKB"/>
</dbReference>
<dbReference type="GO" id="GO:0005524">
    <property type="term" value="F:ATP binding"/>
    <property type="evidence" value="ECO:0007669"/>
    <property type="project" value="UniProtKB-UniRule"/>
</dbReference>
<dbReference type="GO" id="GO:0016887">
    <property type="term" value="F:ATP hydrolysis activity"/>
    <property type="evidence" value="ECO:0000314"/>
    <property type="project" value="EcoCyc"/>
</dbReference>
<dbReference type="GO" id="GO:0003677">
    <property type="term" value="F:DNA binding"/>
    <property type="evidence" value="ECO:0000314"/>
    <property type="project" value="EcoCyc"/>
</dbReference>
<dbReference type="GO" id="GO:0009381">
    <property type="term" value="F:excinuclease ABC activity"/>
    <property type="evidence" value="ECO:0007669"/>
    <property type="project" value="UniProtKB-UniRule"/>
</dbReference>
<dbReference type="GO" id="GO:0042802">
    <property type="term" value="F:identical protein binding"/>
    <property type="evidence" value="ECO:0000353"/>
    <property type="project" value="IntAct"/>
</dbReference>
<dbReference type="GO" id="GO:0008270">
    <property type="term" value="F:zinc ion binding"/>
    <property type="evidence" value="ECO:0007669"/>
    <property type="project" value="UniProtKB-UniRule"/>
</dbReference>
<dbReference type="GO" id="GO:0006281">
    <property type="term" value="P:DNA repair"/>
    <property type="evidence" value="ECO:0000315"/>
    <property type="project" value="EcoCyc"/>
</dbReference>
<dbReference type="GO" id="GO:0006289">
    <property type="term" value="P:nucleotide-excision repair"/>
    <property type="evidence" value="ECO:0000303"/>
    <property type="project" value="ComplexPortal"/>
</dbReference>
<dbReference type="GO" id="GO:0000715">
    <property type="term" value="P:nucleotide-excision repair, DNA damage recognition"/>
    <property type="evidence" value="ECO:0000314"/>
    <property type="project" value="ComplexPortal"/>
</dbReference>
<dbReference type="GO" id="GO:0006294">
    <property type="term" value="P:nucleotide-excision repair, preincision complex assembly"/>
    <property type="evidence" value="ECO:0000303"/>
    <property type="project" value="ComplexPortal"/>
</dbReference>
<dbReference type="GO" id="GO:0009314">
    <property type="term" value="P:response to radiation"/>
    <property type="evidence" value="ECO:0000315"/>
    <property type="project" value="EcoCyc"/>
</dbReference>
<dbReference type="GO" id="GO:0009432">
    <property type="term" value="P:SOS response"/>
    <property type="evidence" value="ECO:0007669"/>
    <property type="project" value="UniProtKB-UniRule"/>
</dbReference>
<dbReference type="CDD" id="cd03270">
    <property type="entry name" value="ABC_UvrA_I"/>
    <property type="match status" value="1"/>
</dbReference>
<dbReference type="CDD" id="cd03271">
    <property type="entry name" value="ABC_UvrA_II"/>
    <property type="match status" value="1"/>
</dbReference>
<dbReference type="FunFam" id="1.10.8.280:FF:000001">
    <property type="entry name" value="UvrABC system protein A"/>
    <property type="match status" value="1"/>
</dbReference>
<dbReference type="FunFam" id="1.20.1580.10:FF:000002">
    <property type="entry name" value="UvrABC system protein A"/>
    <property type="match status" value="1"/>
</dbReference>
<dbReference type="FunFam" id="1.20.1580.10:FF:000003">
    <property type="entry name" value="UvrABC system protein A"/>
    <property type="match status" value="1"/>
</dbReference>
<dbReference type="Gene3D" id="1.10.8.280">
    <property type="entry name" value="ABC transporter ATPase domain-like"/>
    <property type="match status" value="1"/>
</dbReference>
<dbReference type="Gene3D" id="1.20.1580.10">
    <property type="entry name" value="ABC transporter ATPase like domain"/>
    <property type="match status" value="2"/>
</dbReference>
<dbReference type="Gene3D" id="3.30.1490.20">
    <property type="entry name" value="ATP-grasp fold, A domain"/>
    <property type="match status" value="1"/>
</dbReference>
<dbReference type="Gene3D" id="3.40.50.300">
    <property type="entry name" value="P-loop containing nucleotide triphosphate hydrolases"/>
    <property type="match status" value="2"/>
</dbReference>
<dbReference type="HAMAP" id="MF_00205">
    <property type="entry name" value="UvrA"/>
    <property type="match status" value="1"/>
</dbReference>
<dbReference type="InterPro" id="IPR003439">
    <property type="entry name" value="ABC_transporter-like_ATP-bd"/>
</dbReference>
<dbReference type="InterPro" id="IPR017871">
    <property type="entry name" value="ABC_transporter-like_CS"/>
</dbReference>
<dbReference type="InterPro" id="IPR013815">
    <property type="entry name" value="ATP_grasp_subdomain_1"/>
</dbReference>
<dbReference type="InterPro" id="IPR027417">
    <property type="entry name" value="P-loop_NTPase"/>
</dbReference>
<dbReference type="InterPro" id="IPR004602">
    <property type="entry name" value="UvrA"/>
</dbReference>
<dbReference type="InterPro" id="IPR041552">
    <property type="entry name" value="UvrA_DNA-bd"/>
</dbReference>
<dbReference type="InterPro" id="IPR041102">
    <property type="entry name" value="UvrA_inter"/>
</dbReference>
<dbReference type="NCBIfam" id="NF001503">
    <property type="entry name" value="PRK00349.1"/>
    <property type="match status" value="1"/>
</dbReference>
<dbReference type="NCBIfam" id="TIGR00630">
    <property type="entry name" value="uvra"/>
    <property type="match status" value="1"/>
</dbReference>
<dbReference type="PANTHER" id="PTHR43152">
    <property type="entry name" value="UVRABC SYSTEM PROTEIN A"/>
    <property type="match status" value="1"/>
</dbReference>
<dbReference type="PANTHER" id="PTHR43152:SF3">
    <property type="entry name" value="UVRABC SYSTEM PROTEIN A"/>
    <property type="match status" value="1"/>
</dbReference>
<dbReference type="Pfam" id="PF00005">
    <property type="entry name" value="ABC_tran"/>
    <property type="match status" value="1"/>
</dbReference>
<dbReference type="Pfam" id="PF17755">
    <property type="entry name" value="UvrA_DNA-bind"/>
    <property type="match status" value="1"/>
</dbReference>
<dbReference type="Pfam" id="PF17760">
    <property type="entry name" value="UvrA_inter"/>
    <property type="match status" value="1"/>
</dbReference>
<dbReference type="SUPFAM" id="SSF52540">
    <property type="entry name" value="P-loop containing nucleoside triphosphate hydrolases"/>
    <property type="match status" value="2"/>
</dbReference>
<dbReference type="PROSITE" id="PS00211">
    <property type="entry name" value="ABC_TRANSPORTER_1"/>
    <property type="match status" value="2"/>
</dbReference>
<dbReference type="PROSITE" id="PS50893">
    <property type="entry name" value="ABC_TRANSPORTER_2"/>
    <property type="match status" value="1"/>
</dbReference>
<evidence type="ECO:0000255" key="1">
    <source>
        <dbReference type="HAMAP-Rule" id="MF_00205"/>
    </source>
</evidence>
<evidence type="ECO:0000269" key="2">
    <source>
    </source>
</evidence>
<evidence type="ECO:0000269" key="3">
    <source>
    </source>
</evidence>
<evidence type="ECO:0007829" key="4">
    <source>
        <dbReference type="PDB" id="4DFC"/>
    </source>
</evidence>
<protein>
    <recommendedName>
        <fullName evidence="1">UvrABC system protein A</fullName>
        <shortName evidence="1">UvrA protein</shortName>
    </recommendedName>
    <alternativeName>
        <fullName evidence="1">Excinuclease ABC subunit A</fullName>
    </alternativeName>
</protein>
<name>UVRA_ECOLI</name>